<organism>
    <name type="scientific">Cervus elaphus</name>
    <name type="common">Red deer</name>
    <dbReference type="NCBI Taxonomy" id="9860"/>
    <lineage>
        <taxon>Eukaryota</taxon>
        <taxon>Metazoa</taxon>
        <taxon>Chordata</taxon>
        <taxon>Craniata</taxon>
        <taxon>Vertebrata</taxon>
        <taxon>Euteleostomi</taxon>
        <taxon>Mammalia</taxon>
        <taxon>Eutheria</taxon>
        <taxon>Laurasiatheria</taxon>
        <taxon>Artiodactyla</taxon>
        <taxon>Ruminantia</taxon>
        <taxon>Pecora</taxon>
        <taxon>Cervidae</taxon>
        <taxon>Cervinae</taxon>
        <taxon>Cervus</taxon>
    </lineage>
</organism>
<reference key="1">
    <citation type="journal article" date="1996" name="Mol. Phylogenet. Evol.">
        <title>K-casein gene phylogeny of higher ruminants (Pecora, Artiodactyla).</title>
        <authorList>
            <person name="Cronin M.A."/>
            <person name="Stuart R."/>
            <person name="Pierson B.J."/>
            <person name="Patton J.C."/>
        </authorList>
    </citation>
    <scope>NUCLEOTIDE SEQUENCE [GENOMIC DNA]</scope>
</reference>
<accession>Q95149</accession>
<accession>Q95148</accession>
<keyword id="KW-0325">Glycoprotein</keyword>
<keyword id="KW-0494">Milk protein</keyword>
<keyword id="KW-0597">Phosphoprotein</keyword>
<keyword id="KW-0964">Secreted</keyword>
<gene>
    <name type="primary">CSN3</name>
    <name type="synonym">CSN10</name>
    <name type="synonym">CSNK</name>
</gene>
<feature type="chain" id="PRO_0000144106" description="Kappa-casein">
    <location>
        <begin position="1" status="less than"/>
        <end position="122"/>
    </location>
</feature>
<feature type="region of interest" description="Disordered" evidence="4">
    <location>
        <begin position="100"/>
        <end position="122"/>
    </location>
</feature>
<feature type="site" description="Cleavage; by chymosin/rennin" evidence="1">
    <location>
        <begin position="58"/>
        <end position="59"/>
    </location>
</feature>
<feature type="modified residue" description="Phosphothreonine" evidence="2">
    <location>
        <position position="98"/>
    </location>
</feature>
<feature type="modified residue" description="Phosphoserine; alternate" evidence="2">
    <location>
        <position position="102"/>
    </location>
</feature>
<feature type="modified residue" description="Phosphoserine" evidence="3">
    <location>
        <position position="119"/>
    </location>
</feature>
<feature type="glycosylation site" description="O-linked (GalNAc...) threonine" evidence="2">
    <location>
        <position position="84"/>
    </location>
</feature>
<feature type="glycosylation site" description="O-linked (GalNAc...) threonine" evidence="2">
    <location>
        <position position="86"/>
    </location>
</feature>
<feature type="glycosylation site" description="O-linked (GalNAc...) threonine" evidence="2">
    <location>
        <position position="89"/>
    </location>
</feature>
<feature type="glycosylation site" description="O-linked (GalNAc...) threonine" evidence="2">
    <location>
        <position position="95"/>
    </location>
</feature>
<feature type="glycosylation site" description="O-linked (GalNAc...) serine; alternate" evidence="2">
    <location>
        <position position="102"/>
    </location>
</feature>
<feature type="glycosylation site" description="O-linked (GalNAc...) threonine" evidence="2">
    <location>
        <position position="118"/>
    </location>
</feature>
<feature type="sequence variant" description="In subsp. Manitobensis.">
    <original>T</original>
    <variation>I</variation>
    <location>
        <position position="47"/>
    </location>
</feature>
<feature type="non-terminal residue">
    <location>
        <position position="1"/>
    </location>
</feature>
<name>CASK_CEREL</name>
<dbReference type="EMBL" id="U37505">
    <property type="protein sequence ID" value="AAC48653.1"/>
    <property type="molecule type" value="Genomic_DNA"/>
</dbReference>
<dbReference type="EMBL" id="U37504">
    <property type="protein sequence ID" value="AAC48652.1"/>
    <property type="molecule type" value="Genomic_DNA"/>
</dbReference>
<dbReference type="GlyCosmos" id="Q95149">
    <property type="glycosylation" value="6 sites, No reported glycans"/>
</dbReference>
<dbReference type="GO" id="GO:0005615">
    <property type="term" value="C:extracellular space"/>
    <property type="evidence" value="ECO:0007669"/>
    <property type="project" value="TreeGrafter"/>
</dbReference>
<dbReference type="GO" id="GO:0007595">
    <property type="term" value="P:lactation"/>
    <property type="evidence" value="ECO:0007669"/>
    <property type="project" value="TreeGrafter"/>
</dbReference>
<dbReference type="GO" id="GO:0050821">
    <property type="term" value="P:protein stabilization"/>
    <property type="evidence" value="ECO:0007669"/>
    <property type="project" value="TreeGrafter"/>
</dbReference>
<dbReference type="InterPro" id="IPR000117">
    <property type="entry name" value="Casein_kappa"/>
</dbReference>
<dbReference type="PANTHER" id="PTHR11470">
    <property type="entry name" value="KAPPA CASEIN"/>
    <property type="match status" value="1"/>
</dbReference>
<dbReference type="PANTHER" id="PTHR11470:SF2">
    <property type="entry name" value="KAPPA-CASEIN"/>
    <property type="match status" value="1"/>
</dbReference>
<dbReference type="Pfam" id="PF00997">
    <property type="entry name" value="Casein_kappa"/>
    <property type="match status" value="1"/>
</dbReference>
<evidence type="ECO:0000250" key="1"/>
<evidence type="ECO:0000250" key="2">
    <source>
        <dbReference type="UniProtKB" id="P02668"/>
    </source>
</evidence>
<evidence type="ECO:0000250" key="3">
    <source>
        <dbReference type="UniProtKB" id="P02670"/>
    </source>
</evidence>
<evidence type="ECO:0000256" key="4">
    <source>
        <dbReference type="SAM" id="MobiDB-lite"/>
    </source>
</evidence>
<evidence type="ECO:0000305" key="5"/>
<protein>
    <recommendedName>
        <fullName>Kappa-casein</fullName>
    </recommendedName>
</protein>
<comment type="function">
    <text>Kappa-casein stabilizes micelle formation, preventing casein precipitation in milk.</text>
</comment>
<comment type="subcellular location">
    <subcellularLocation>
        <location>Secreted</location>
    </subcellularLocation>
</comment>
<comment type="tissue specificity">
    <text>Mammary gland specific. Secreted in milk.</text>
</comment>
<comment type="similarity">
    <text evidence="5">Belongs to the kappa-casein family.</text>
</comment>
<proteinExistence type="evidence at transcript level"/>
<sequence>VALINNQFLPYPYYVKPGAVRSPAQILQWQVLPNTVPAKFCQAQPTTMARHPHPRLSFMAIPPKKNQDKTDIPSINTIATAESTITPTTEAIVDTVATQEASSEVIESAPEAKTDQVTSTVV</sequence>